<organism>
    <name type="scientific">Corynebacterium glutamicum (strain ATCC 13032 / DSM 20300 / JCM 1318 / BCRC 11384 / CCUG 27702 / LMG 3730 / NBRC 12168 / NCIMB 10025 / NRRL B-2784 / 534)</name>
    <dbReference type="NCBI Taxonomy" id="196627"/>
    <lineage>
        <taxon>Bacteria</taxon>
        <taxon>Bacillati</taxon>
        <taxon>Actinomycetota</taxon>
        <taxon>Actinomycetes</taxon>
        <taxon>Mycobacteriales</taxon>
        <taxon>Corynebacteriaceae</taxon>
        <taxon>Corynebacterium</taxon>
    </lineage>
</organism>
<name>CLPS_CORGL</name>
<dbReference type="EMBL" id="BA000036">
    <property type="protein sequence ID" value="BAB99908.1"/>
    <property type="molecule type" value="Genomic_DNA"/>
</dbReference>
<dbReference type="EMBL" id="BX927155">
    <property type="protein sequence ID" value="CAF21178.1"/>
    <property type="status" value="ALT_INIT"/>
    <property type="molecule type" value="Genomic_DNA"/>
</dbReference>
<dbReference type="RefSeq" id="NP_601717.1">
    <property type="nucleotide sequence ID" value="NC_003450.3"/>
</dbReference>
<dbReference type="RefSeq" id="WP_011897801.1">
    <property type="nucleotide sequence ID" value="NC_006958.1"/>
</dbReference>
<dbReference type="SMR" id="Q8NMQ1"/>
<dbReference type="STRING" id="196627.cg2772"/>
<dbReference type="GeneID" id="1020464"/>
<dbReference type="KEGG" id="cgb:cg2772"/>
<dbReference type="KEGG" id="cgl:Cgl2515"/>
<dbReference type="PATRIC" id="fig|196627.13.peg.2449"/>
<dbReference type="eggNOG" id="COG2127">
    <property type="taxonomic scope" value="Bacteria"/>
</dbReference>
<dbReference type="HOGENOM" id="CLU_153743_0_0_11"/>
<dbReference type="OrthoDB" id="162238at2"/>
<dbReference type="BioCyc" id="CORYNE:G18NG-12119-MONOMER"/>
<dbReference type="Proteomes" id="UP000000582">
    <property type="component" value="Chromosome"/>
</dbReference>
<dbReference type="Proteomes" id="UP000001009">
    <property type="component" value="Chromosome"/>
</dbReference>
<dbReference type="GO" id="GO:0030163">
    <property type="term" value="P:protein catabolic process"/>
    <property type="evidence" value="ECO:0007669"/>
    <property type="project" value="InterPro"/>
</dbReference>
<dbReference type="GO" id="GO:0006508">
    <property type="term" value="P:proteolysis"/>
    <property type="evidence" value="ECO:0007669"/>
    <property type="project" value="UniProtKB-UniRule"/>
</dbReference>
<dbReference type="Gene3D" id="3.30.1390.10">
    <property type="match status" value="1"/>
</dbReference>
<dbReference type="HAMAP" id="MF_00302">
    <property type="entry name" value="ClpS"/>
    <property type="match status" value="1"/>
</dbReference>
<dbReference type="InterPro" id="IPR022935">
    <property type="entry name" value="ClpS"/>
</dbReference>
<dbReference type="InterPro" id="IPR003769">
    <property type="entry name" value="ClpS_core"/>
</dbReference>
<dbReference type="InterPro" id="IPR014719">
    <property type="entry name" value="Ribosomal_bL12_C/ClpS-like"/>
</dbReference>
<dbReference type="NCBIfam" id="NF000668">
    <property type="entry name" value="PRK00033.1-1"/>
    <property type="match status" value="1"/>
</dbReference>
<dbReference type="Pfam" id="PF02617">
    <property type="entry name" value="ClpS"/>
    <property type="match status" value="1"/>
</dbReference>
<dbReference type="SUPFAM" id="SSF54736">
    <property type="entry name" value="ClpS-like"/>
    <property type="match status" value="1"/>
</dbReference>
<reference key="1">
    <citation type="journal article" date="2003" name="Appl. Microbiol. Biotechnol.">
        <title>The Corynebacterium glutamicum genome: features and impacts on biotechnological processes.</title>
        <authorList>
            <person name="Ikeda M."/>
            <person name="Nakagawa S."/>
        </authorList>
    </citation>
    <scope>NUCLEOTIDE SEQUENCE [LARGE SCALE GENOMIC DNA]</scope>
    <source>
        <strain>ATCC 13032 / DSM 20300 / JCM 1318 / BCRC 11384 / CCUG 27702 / LMG 3730 / NBRC 12168 / NCIMB 10025 / NRRL B-2784 / 534</strain>
    </source>
</reference>
<reference key="2">
    <citation type="journal article" date="2003" name="J. Biotechnol.">
        <title>The complete Corynebacterium glutamicum ATCC 13032 genome sequence and its impact on the production of L-aspartate-derived amino acids and vitamins.</title>
        <authorList>
            <person name="Kalinowski J."/>
            <person name="Bathe B."/>
            <person name="Bartels D."/>
            <person name="Bischoff N."/>
            <person name="Bott M."/>
            <person name="Burkovski A."/>
            <person name="Dusch N."/>
            <person name="Eggeling L."/>
            <person name="Eikmanns B.J."/>
            <person name="Gaigalat L."/>
            <person name="Goesmann A."/>
            <person name="Hartmann M."/>
            <person name="Huthmacher K."/>
            <person name="Kraemer R."/>
            <person name="Linke B."/>
            <person name="McHardy A.C."/>
            <person name="Meyer F."/>
            <person name="Moeckel B."/>
            <person name="Pfefferle W."/>
            <person name="Puehler A."/>
            <person name="Rey D.A."/>
            <person name="Rueckert C."/>
            <person name="Rupp O."/>
            <person name="Sahm H."/>
            <person name="Wendisch V.F."/>
            <person name="Wiegraebe I."/>
            <person name="Tauch A."/>
        </authorList>
    </citation>
    <scope>NUCLEOTIDE SEQUENCE [LARGE SCALE GENOMIC DNA]</scope>
    <source>
        <strain>ATCC 13032 / DSM 20300 / JCM 1318 / BCRC 11384 / CCUG 27702 / LMG 3730 / NBRC 12168 / NCIMB 10025 / NRRL B-2784 / 534</strain>
    </source>
</reference>
<gene>
    <name evidence="1" type="primary">clpS</name>
    <name type="ordered locus">Cgl2515</name>
    <name type="ordered locus">cg2772</name>
</gene>
<evidence type="ECO:0000255" key="1">
    <source>
        <dbReference type="HAMAP-Rule" id="MF_00302"/>
    </source>
</evidence>
<evidence type="ECO:0000305" key="2"/>
<comment type="function">
    <text evidence="1">Involved in the modulation of the specificity of the ClpAP-mediated ATP-dependent protein degradation.</text>
</comment>
<comment type="subunit">
    <text evidence="1">Binds to the N-terminal domain of the chaperone ClpA.</text>
</comment>
<comment type="similarity">
    <text evidence="1">Belongs to the ClpS family.</text>
</comment>
<comment type="sequence caution" evidence="2">
    <conflict type="erroneous initiation">
        <sequence resource="EMBL-CDS" id="CAF21178"/>
    </conflict>
</comment>
<sequence length="100" mass="10980">MSSPSAPLATPDVELDVHTLSSENLPWLCIVWDDPVNLMSYVTYVFQTVLGFSKKRATELMMQVHTEGKAVVSSGEKDKVEGDVKKLHTAGLWATMQQAG</sequence>
<accession>Q8NMQ1</accession>
<protein>
    <recommendedName>
        <fullName evidence="1">ATP-dependent Clp protease adapter protein ClpS</fullName>
    </recommendedName>
</protein>
<keyword id="KW-1185">Reference proteome</keyword>
<proteinExistence type="inferred from homology"/>
<feature type="chain" id="PRO_0000215703" description="ATP-dependent Clp protease adapter protein ClpS">
    <location>
        <begin position="1"/>
        <end position="100"/>
    </location>
</feature>